<keyword id="KW-1064">Adaptive immunity</keyword>
<keyword id="KW-1003">Cell membrane</keyword>
<keyword id="KW-0903">Direct protein sequencing</keyword>
<keyword id="KW-1015">Disulfide bond</keyword>
<keyword id="KW-0967">Endosome</keyword>
<keyword id="KW-0325">Glycoprotein</keyword>
<keyword id="KW-0391">Immunity</keyword>
<keyword id="KW-0393">Immunoglobulin domain</keyword>
<keyword id="KW-0458">Lysosome</keyword>
<keyword id="KW-0472">Membrane</keyword>
<keyword id="KW-1185">Reference proteome</keyword>
<keyword id="KW-0732">Signal</keyword>
<keyword id="KW-0812">Transmembrane</keyword>
<keyword id="KW-1133">Transmembrane helix</keyword>
<protein>
    <recommendedName>
        <fullName>T-cell surface glycoprotein CD1b-2</fullName>
    </recommendedName>
    <alternativeName>
        <fullName>Antigen IAH-CC14</fullName>
    </alternativeName>
    <alternativeName>
        <fullName>sCD1B-42</fullName>
    </alternativeName>
    <cdAntigenName>CD1b-2</cdAntigenName>
</protein>
<feature type="signal peptide" evidence="4">
    <location>
        <begin position="1"/>
        <end position="20"/>
    </location>
</feature>
<feature type="chain" id="PRO_0000014597" description="T-cell surface glycoprotein CD1b-2">
    <location>
        <begin position="21"/>
        <end position="333"/>
    </location>
</feature>
<feature type="topological domain" description="Extracellular" evidence="2">
    <location>
        <begin position="21"/>
        <end position="302"/>
    </location>
</feature>
<feature type="transmembrane region" description="Helical" evidence="2">
    <location>
        <begin position="303"/>
        <end position="323"/>
    </location>
</feature>
<feature type="topological domain" description="Cytoplasmic" evidence="2">
    <location>
        <begin position="324"/>
        <end position="333"/>
    </location>
</feature>
<feature type="domain" description="Ig-like">
    <location>
        <begin position="185"/>
        <end position="295"/>
    </location>
</feature>
<feature type="short sequence motif" description="Internalization signal" evidence="1">
    <location>
        <begin position="329"/>
        <end position="332"/>
    </location>
</feature>
<feature type="glycosylation site" description="N-linked (GlcNAc...) asparagine" evidence="2">
    <location>
        <position position="38"/>
    </location>
</feature>
<feature type="glycosylation site" description="N-linked (GlcNAc...) asparagine" evidence="2">
    <location>
        <position position="75"/>
    </location>
</feature>
<feature type="glycosylation site" description="N-linked (GlcNAc...) asparagine" evidence="2">
    <location>
        <position position="146"/>
    </location>
</feature>
<feature type="disulfide bond" evidence="3">
    <location>
        <begin position="120"/>
        <end position="184"/>
    </location>
</feature>
<feature type="disulfide bond" evidence="3">
    <location>
        <begin position="149"/>
        <end position="163"/>
    </location>
</feature>
<feature type="disulfide bond" evidence="3">
    <location>
        <begin position="224"/>
        <end position="279"/>
    </location>
</feature>
<accession>Q29422</accession>
<organism>
    <name type="scientific">Ovis aries</name>
    <name type="common">Sheep</name>
    <dbReference type="NCBI Taxonomy" id="9940"/>
    <lineage>
        <taxon>Eukaryota</taxon>
        <taxon>Metazoa</taxon>
        <taxon>Chordata</taxon>
        <taxon>Craniata</taxon>
        <taxon>Vertebrata</taxon>
        <taxon>Euteleostomi</taxon>
        <taxon>Mammalia</taxon>
        <taxon>Eutheria</taxon>
        <taxon>Laurasiatheria</taxon>
        <taxon>Artiodactyla</taxon>
        <taxon>Ruminantia</taxon>
        <taxon>Pecora</taxon>
        <taxon>Bovidae</taxon>
        <taxon>Caprinae</taxon>
        <taxon>Ovis</taxon>
    </lineage>
</organism>
<proteinExistence type="evidence at protein level"/>
<reference key="1">
    <citation type="journal article" date="1996" name="Immunogenetics">
        <title>The sheep CD1 gene family contains at least four CD1B homologues.</title>
        <authorList>
            <person name="Ferguson E.E."/>
            <person name="Dutia B.M."/>
            <person name="Hein W.R."/>
            <person name="Hopkins J."/>
        </authorList>
    </citation>
    <scope>NUCLEOTIDE SEQUENCE [MRNA]</scope>
    <source>
        <tissue>Thymus</tissue>
    </source>
</reference>
<reference key="2">
    <citation type="journal article" date="1999" name="Immunogenetics">
        <title>Amino-terminal sequencing of sheep CD1 antigens and identification of a sheep CD1D gene.</title>
        <authorList>
            <person name="Rhind S.M."/>
            <person name="Hopkins J."/>
            <person name="Dutia B.M."/>
        </authorList>
    </citation>
    <scope>PROTEIN SEQUENCE OF 21-33</scope>
</reference>
<evidence type="ECO:0000250" key="1"/>
<evidence type="ECO:0000255" key="2"/>
<evidence type="ECO:0000255" key="3">
    <source>
        <dbReference type="PROSITE-ProRule" id="PRU00114"/>
    </source>
</evidence>
<evidence type="ECO:0000269" key="4">
    <source>
    </source>
</evidence>
<dbReference type="EMBL" id="Z36891">
    <property type="protein sequence ID" value="CAA85360.1"/>
    <property type="molecule type" value="mRNA"/>
</dbReference>
<dbReference type="PIR" id="S47246">
    <property type="entry name" value="S47246"/>
</dbReference>
<dbReference type="RefSeq" id="NP_001009423.1">
    <property type="nucleotide sequence ID" value="NM_001009423.1"/>
</dbReference>
<dbReference type="SMR" id="Q29422"/>
<dbReference type="PaxDb" id="9940-ENSOARP00000002693"/>
<dbReference type="GeneID" id="443441"/>
<dbReference type="KEGG" id="oas:443441"/>
<dbReference type="eggNOG" id="ENOG502SJH6">
    <property type="taxonomic scope" value="Eukaryota"/>
</dbReference>
<dbReference type="OrthoDB" id="8890485at2759"/>
<dbReference type="Proteomes" id="UP000002356">
    <property type="component" value="Unplaced"/>
</dbReference>
<dbReference type="GO" id="GO:0010008">
    <property type="term" value="C:endosome membrane"/>
    <property type="evidence" value="ECO:0007669"/>
    <property type="project" value="UniProtKB-SubCell"/>
</dbReference>
<dbReference type="GO" id="GO:0009897">
    <property type="term" value="C:external side of plasma membrane"/>
    <property type="evidence" value="ECO:0007669"/>
    <property type="project" value="TreeGrafter"/>
</dbReference>
<dbReference type="GO" id="GO:0005615">
    <property type="term" value="C:extracellular space"/>
    <property type="evidence" value="ECO:0007669"/>
    <property type="project" value="TreeGrafter"/>
</dbReference>
<dbReference type="GO" id="GO:0005765">
    <property type="term" value="C:lysosomal membrane"/>
    <property type="evidence" value="ECO:0007669"/>
    <property type="project" value="UniProtKB-SubCell"/>
</dbReference>
<dbReference type="GO" id="GO:0030883">
    <property type="term" value="F:endogenous lipid antigen binding"/>
    <property type="evidence" value="ECO:0007669"/>
    <property type="project" value="TreeGrafter"/>
</dbReference>
<dbReference type="GO" id="GO:0030884">
    <property type="term" value="F:exogenous lipid antigen binding"/>
    <property type="evidence" value="ECO:0007669"/>
    <property type="project" value="TreeGrafter"/>
</dbReference>
<dbReference type="GO" id="GO:0071723">
    <property type="term" value="F:lipopeptide binding"/>
    <property type="evidence" value="ECO:0007669"/>
    <property type="project" value="TreeGrafter"/>
</dbReference>
<dbReference type="GO" id="GO:0002250">
    <property type="term" value="P:adaptive immune response"/>
    <property type="evidence" value="ECO:0007669"/>
    <property type="project" value="UniProtKB-KW"/>
</dbReference>
<dbReference type="GO" id="GO:0048006">
    <property type="term" value="P:antigen processing and presentation, endogenous lipid antigen via MHC class Ib"/>
    <property type="evidence" value="ECO:0007669"/>
    <property type="project" value="TreeGrafter"/>
</dbReference>
<dbReference type="GO" id="GO:0048007">
    <property type="term" value="P:antigen processing and presentation, exogenous lipid antigen via MHC class Ib"/>
    <property type="evidence" value="ECO:0007669"/>
    <property type="project" value="TreeGrafter"/>
</dbReference>
<dbReference type="GO" id="GO:0001916">
    <property type="term" value="P:positive regulation of T cell mediated cytotoxicity"/>
    <property type="evidence" value="ECO:0007669"/>
    <property type="project" value="TreeGrafter"/>
</dbReference>
<dbReference type="CDD" id="cd21029">
    <property type="entry name" value="IgC1_CD1"/>
    <property type="match status" value="1"/>
</dbReference>
<dbReference type="FunFam" id="2.60.40.10:FF:000254">
    <property type="entry name" value="Antigen-presenting glycoprotein CD1d1"/>
    <property type="match status" value="1"/>
</dbReference>
<dbReference type="FunFam" id="3.30.500.10:FF:000002">
    <property type="entry name" value="Antigen-presenting glycoprotein CD1d1"/>
    <property type="match status" value="1"/>
</dbReference>
<dbReference type="Gene3D" id="2.60.40.10">
    <property type="entry name" value="Immunoglobulins"/>
    <property type="match status" value="1"/>
</dbReference>
<dbReference type="Gene3D" id="3.30.500.10">
    <property type="entry name" value="MHC class I-like antigen recognition-like"/>
    <property type="match status" value="1"/>
</dbReference>
<dbReference type="InterPro" id="IPR007110">
    <property type="entry name" value="Ig-like_dom"/>
</dbReference>
<dbReference type="InterPro" id="IPR036179">
    <property type="entry name" value="Ig-like_dom_sf"/>
</dbReference>
<dbReference type="InterPro" id="IPR013783">
    <property type="entry name" value="Ig-like_fold"/>
</dbReference>
<dbReference type="InterPro" id="IPR003597">
    <property type="entry name" value="Ig_C1-set"/>
</dbReference>
<dbReference type="InterPro" id="IPR050208">
    <property type="entry name" value="MHC_class-I_related"/>
</dbReference>
<dbReference type="InterPro" id="IPR011161">
    <property type="entry name" value="MHC_I-like_Ag-recog"/>
</dbReference>
<dbReference type="InterPro" id="IPR037055">
    <property type="entry name" value="MHC_I-like_Ag-recog_sf"/>
</dbReference>
<dbReference type="InterPro" id="IPR011162">
    <property type="entry name" value="MHC_I/II-like_Ag-recog"/>
</dbReference>
<dbReference type="PANTHER" id="PTHR16675">
    <property type="entry name" value="MHC CLASS I-RELATED"/>
    <property type="match status" value="1"/>
</dbReference>
<dbReference type="PANTHER" id="PTHR16675:SF130">
    <property type="entry name" value="T-CELL SURFACE GLYCOPROTEIN CD1B"/>
    <property type="match status" value="1"/>
</dbReference>
<dbReference type="Pfam" id="PF07654">
    <property type="entry name" value="C1-set"/>
    <property type="match status" value="1"/>
</dbReference>
<dbReference type="Pfam" id="PF16497">
    <property type="entry name" value="MHC_I_3"/>
    <property type="match status" value="1"/>
</dbReference>
<dbReference type="SMART" id="SM00407">
    <property type="entry name" value="IGc1"/>
    <property type="match status" value="1"/>
</dbReference>
<dbReference type="SUPFAM" id="SSF48726">
    <property type="entry name" value="Immunoglobulin"/>
    <property type="match status" value="1"/>
</dbReference>
<dbReference type="SUPFAM" id="SSF54452">
    <property type="entry name" value="MHC antigen-recognition domain"/>
    <property type="match status" value="1"/>
</dbReference>
<dbReference type="PROSITE" id="PS50835">
    <property type="entry name" value="IG_LIKE"/>
    <property type="match status" value="1"/>
</dbReference>
<comment type="function">
    <text evidence="1">Antigen-presenting protein that binds self and non-self lipid and glycolipid antigens and presents them to T-cell receptors on natural killer T-cells.</text>
</comment>
<comment type="subunit">
    <text evidence="1">Heterodimer with B2M (beta-2-microglobulin). Interacts with saposin C (By similarity).</text>
</comment>
<comment type="subcellular location">
    <subcellularLocation>
        <location evidence="1">Cell membrane</location>
        <topology evidence="1">Single-pass type I membrane protein</topology>
    </subcellularLocation>
    <subcellularLocation>
        <location evidence="1">Endosome membrane</location>
    </subcellularLocation>
    <subcellularLocation>
        <location evidence="1">Lysosome membrane</location>
    </subcellularLocation>
    <text evidence="1">Subject to intracellular trafficking between the cell membrane, endosomes and lysosomes. Localizes to cell surface lipid rafts (By similarity).</text>
</comment>
<comment type="miscellaneous">
    <text evidence="1">During protein synthesis and maturation, CD1 family members bind endogenous lipids that are replaced by lipid or glycolipid antigens when the proteins are internalized and pass through endosomes or lysosomes, before trafficking back to the cell surface. Interaction with saposin C is required for the loading of bacterial lipid antigens onto CD1B in the lysosome (By similarity).</text>
</comment>
<sequence>MLLLPLLLLGVILPGGDNEDVFQGPTSFHLKQISTFVNSTWAQNLGSGWLDDLQIHGWESDSGTAIFLKPWSKGNFSDEEITELVDLFRVYLIGFIREVQDRVNEFQLEYPFVIQVIEGCELHSGEAIESSLRGALGGLDVLRIQNHSCMPAPDSGNRGQKLCALLSQYQGTSDIIERLVSETCPRYLLGVLDAGKAELQRQVKPEAWLSSGPTPGPGRLLLVCHVSGFYPKPVQVIWMRGKQEQPGTQQGDIMPNADWTWYLRVTLNVAAGEAAGLSCRVKHSSLGDQDIILYWGHPTSIGLILVAIIVPSLILSICLALWFWRRWSYQNIL</sequence>
<name>CD1B2_SHEEP</name>